<reference key="1">
    <citation type="journal article" date="2009" name="PLoS Genet.">
        <title>Organised genome dynamics in the Escherichia coli species results in highly diverse adaptive paths.</title>
        <authorList>
            <person name="Touchon M."/>
            <person name="Hoede C."/>
            <person name="Tenaillon O."/>
            <person name="Barbe V."/>
            <person name="Baeriswyl S."/>
            <person name="Bidet P."/>
            <person name="Bingen E."/>
            <person name="Bonacorsi S."/>
            <person name="Bouchier C."/>
            <person name="Bouvet O."/>
            <person name="Calteau A."/>
            <person name="Chiapello H."/>
            <person name="Clermont O."/>
            <person name="Cruveiller S."/>
            <person name="Danchin A."/>
            <person name="Diard M."/>
            <person name="Dossat C."/>
            <person name="Karoui M.E."/>
            <person name="Frapy E."/>
            <person name="Garry L."/>
            <person name="Ghigo J.M."/>
            <person name="Gilles A.M."/>
            <person name="Johnson J."/>
            <person name="Le Bouguenec C."/>
            <person name="Lescat M."/>
            <person name="Mangenot S."/>
            <person name="Martinez-Jehanne V."/>
            <person name="Matic I."/>
            <person name="Nassif X."/>
            <person name="Oztas S."/>
            <person name="Petit M.A."/>
            <person name="Pichon C."/>
            <person name="Rouy Z."/>
            <person name="Ruf C.S."/>
            <person name="Schneider D."/>
            <person name="Tourret J."/>
            <person name="Vacherie B."/>
            <person name="Vallenet D."/>
            <person name="Medigue C."/>
            <person name="Rocha E.P.C."/>
            <person name="Denamur E."/>
        </authorList>
    </citation>
    <scope>NUCLEOTIDE SEQUENCE [LARGE SCALE GENOMIC DNA]</scope>
    <source>
        <strain>UMN026 / ExPEC</strain>
    </source>
</reference>
<organism>
    <name type="scientific">Escherichia coli O17:K52:H18 (strain UMN026 / ExPEC)</name>
    <dbReference type="NCBI Taxonomy" id="585056"/>
    <lineage>
        <taxon>Bacteria</taxon>
        <taxon>Pseudomonadati</taxon>
        <taxon>Pseudomonadota</taxon>
        <taxon>Gammaproteobacteria</taxon>
        <taxon>Enterobacterales</taxon>
        <taxon>Enterobacteriaceae</taxon>
        <taxon>Escherichia</taxon>
    </lineage>
</organism>
<comment type="function">
    <text evidence="1">Catalyzes the reductive methylation of 2'-deoxyuridine-5'-monophosphate (dUMP) to 2'-deoxythymidine-5'-monophosphate (dTMP) while utilizing 5,10-methylenetetrahydrofolate (mTHF) as the methyl donor and reductant in the reaction, yielding dihydrofolate (DHF) as a by-product. This enzymatic reaction provides an intracellular de novo source of dTMP, an essential precursor for DNA biosynthesis.</text>
</comment>
<comment type="catalytic activity">
    <reaction evidence="1">
        <text>dUMP + (6R)-5,10-methylene-5,6,7,8-tetrahydrofolate = 7,8-dihydrofolate + dTMP</text>
        <dbReference type="Rhea" id="RHEA:12104"/>
        <dbReference type="ChEBI" id="CHEBI:15636"/>
        <dbReference type="ChEBI" id="CHEBI:57451"/>
        <dbReference type="ChEBI" id="CHEBI:63528"/>
        <dbReference type="ChEBI" id="CHEBI:246422"/>
        <dbReference type="EC" id="2.1.1.45"/>
    </reaction>
</comment>
<comment type="pathway">
    <text evidence="1">Pyrimidine metabolism; dTTP biosynthesis.</text>
</comment>
<comment type="subunit">
    <text evidence="1">Homodimer.</text>
</comment>
<comment type="subcellular location">
    <subcellularLocation>
        <location evidence="1">Cytoplasm</location>
    </subcellularLocation>
</comment>
<comment type="similarity">
    <text evidence="1">Belongs to the thymidylate synthase family. Bacterial-type ThyA subfamily.</text>
</comment>
<gene>
    <name evidence="1" type="primary">thyA</name>
    <name type="ordered locus">ECUMN_3154</name>
</gene>
<protein>
    <recommendedName>
        <fullName evidence="1">Thymidylate synthase</fullName>
        <shortName evidence="1">TS</shortName>
        <shortName evidence="1">TSase</shortName>
        <ecNumber evidence="1">2.1.1.45</ecNumber>
    </recommendedName>
</protein>
<accession>B7N759</accession>
<evidence type="ECO:0000255" key="1">
    <source>
        <dbReference type="HAMAP-Rule" id="MF_00008"/>
    </source>
</evidence>
<keyword id="KW-0963">Cytoplasm</keyword>
<keyword id="KW-0489">Methyltransferase</keyword>
<keyword id="KW-0545">Nucleotide biosynthesis</keyword>
<keyword id="KW-0808">Transferase</keyword>
<feature type="chain" id="PRO_1000197242" description="Thymidylate synthase">
    <location>
        <begin position="1"/>
        <end position="264"/>
    </location>
</feature>
<feature type="active site" description="Nucleophile" evidence="1">
    <location>
        <position position="146"/>
    </location>
</feature>
<feature type="binding site" description="in other chain" evidence="1">
    <location>
        <position position="21"/>
    </location>
    <ligand>
        <name>dUMP</name>
        <dbReference type="ChEBI" id="CHEBI:246422"/>
        <note>ligand shared between dimeric partners</note>
    </ligand>
</feature>
<feature type="binding site" evidence="1">
    <location>
        <position position="51"/>
    </location>
    <ligand>
        <name>(6R)-5,10-methylene-5,6,7,8-tetrahydrofolate</name>
        <dbReference type="ChEBI" id="CHEBI:15636"/>
    </ligand>
</feature>
<feature type="binding site" evidence="1">
    <location>
        <begin position="126"/>
        <end position="127"/>
    </location>
    <ligand>
        <name>dUMP</name>
        <dbReference type="ChEBI" id="CHEBI:246422"/>
        <note>ligand shared between dimeric partners</note>
    </ligand>
</feature>
<feature type="binding site" description="in other chain" evidence="1">
    <location>
        <begin position="166"/>
        <end position="169"/>
    </location>
    <ligand>
        <name>dUMP</name>
        <dbReference type="ChEBI" id="CHEBI:246422"/>
        <note>ligand shared between dimeric partners</note>
    </ligand>
</feature>
<feature type="binding site" evidence="1">
    <location>
        <position position="169"/>
    </location>
    <ligand>
        <name>(6R)-5,10-methylene-5,6,7,8-tetrahydrofolate</name>
        <dbReference type="ChEBI" id="CHEBI:15636"/>
    </ligand>
</feature>
<feature type="binding site" description="in other chain" evidence="1">
    <location>
        <position position="177"/>
    </location>
    <ligand>
        <name>dUMP</name>
        <dbReference type="ChEBI" id="CHEBI:246422"/>
        <note>ligand shared between dimeric partners</note>
    </ligand>
</feature>
<feature type="binding site" description="in other chain" evidence="1">
    <location>
        <begin position="207"/>
        <end position="209"/>
    </location>
    <ligand>
        <name>dUMP</name>
        <dbReference type="ChEBI" id="CHEBI:246422"/>
        <note>ligand shared between dimeric partners</note>
    </ligand>
</feature>
<feature type="binding site" evidence="1">
    <location>
        <position position="263"/>
    </location>
    <ligand>
        <name>(6R)-5,10-methylene-5,6,7,8-tetrahydrofolate</name>
        <dbReference type="ChEBI" id="CHEBI:15636"/>
    </ligand>
</feature>
<name>TYSY_ECOLU</name>
<proteinExistence type="inferred from homology"/>
<dbReference type="EC" id="2.1.1.45" evidence="1"/>
<dbReference type="EMBL" id="CU928163">
    <property type="protein sequence ID" value="CAR14320.1"/>
    <property type="molecule type" value="Genomic_DNA"/>
</dbReference>
<dbReference type="RefSeq" id="WP_000816232.1">
    <property type="nucleotide sequence ID" value="NC_011751.1"/>
</dbReference>
<dbReference type="RefSeq" id="YP_002413840.1">
    <property type="nucleotide sequence ID" value="NC_011751.1"/>
</dbReference>
<dbReference type="SMR" id="B7N759"/>
<dbReference type="STRING" id="585056.ECUMN_3154"/>
<dbReference type="GeneID" id="93779171"/>
<dbReference type="KEGG" id="eum:ECUMN_3154"/>
<dbReference type="PATRIC" id="fig|585056.7.peg.3336"/>
<dbReference type="HOGENOM" id="CLU_021669_0_0_6"/>
<dbReference type="UniPathway" id="UPA00575"/>
<dbReference type="Proteomes" id="UP000007097">
    <property type="component" value="Chromosome"/>
</dbReference>
<dbReference type="GO" id="GO:0005829">
    <property type="term" value="C:cytosol"/>
    <property type="evidence" value="ECO:0007669"/>
    <property type="project" value="TreeGrafter"/>
</dbReference>
<dbReference type="GO" id="GO:0004799">
    <property type="term" value="F:thymidylate synthase activity"/>
    <property type="evidence" value="ECO:0007669"/>
    <property type="project" value="UniProtKB-UniRule"/>
</dbReference>
<dbReference type="GO" id="GO:0006231">
    <property type="term" value="P:dTMP biosynthetic process"/>
    <property type="evidence" value="ECO:0007669"/>
    <property type="project" value="UniProtKB-UniRule"/>
</dbReference>
<dbReference type="GO" id="GO:0006235">
    <property type="term" value="P:dTTP biosynthetic process"/>
    <property type="evidence" value="ECO:0007669"/>
    <property type="project" value="UniProtKB-UniRule"/>
</dbReference>
<dbReference type="GO" id="GO:0032259">
    <property type="term" value="P:methylation"/>
    <property type="evidence" value="ECO:0007669"/>
    <property type="project" value="UniProtKB-KW"/>
</dbReference>
<dbReference type="CDD" id="cd00351">
    <property type="entry name" value="TS_Pyrimidine_HMase"/>
    <property type="match status" value="1"/>
</dbReference>
<dbReference type="FunFam" id="3.30.572.10:FF:000001">
    <property type="entry name" value="Thymidylate synthase"/>
    <property type="match status" value="1"/>
</dbReference>
<dbReference type="Gene3D" id="3.30.572.10">
    <property type="entry name" value="Thymidylate synthase/dCMP hydroxymethylase domain"/>
    <property type="match status" value="1"/>
</dbReference>
<dbReference type="HAMAP" id="MF_00008">
    <property type="entry name" value="Thymidy_synth_bact"/>
    <property type="match status" value="1"/>
</dbReference>
<dbReference type="InterPro" id="IPR045097">
    <property type="entry name" value="Thymidate_synth/dCMP_Mease"/>
</dbReference>
<dbReference type="InterPro" id="IPR023451">
    <property type="entry name" value="Thymidate_synth/dCMP_Mease_dom"/>
</dbReference>
<dbReference type="InterPro" id="IPR036926">
    <property type="entry name" value="Thymidate_synth/dCMP_Mease_sf"/>
</dbReference>
<dbReference type="InterPro" id="IPR000398">
    <property type="entry name" value="Thymidylate_synthase"/>
</dbReference>
<dbReference type="InterPro" id="IPR020940">
    <property type="entry name" value="Thymidylate_synthase_AS"/>
</dbReference>
<dbReference type="NCBIfam" id="NF002497">
    <property type="entry name" value="PRK01827.1-3"/>
    <property type="match status" value="1"/>
</dbReference>
<dbReference type="NCBIfam" id="NF002499">
    <property type="entry name" value="PRK01827.1-5"/>
    <property type="match status" value="1"/>
</dbReference>
<dbReference type="NCBIfam" id="TIGR03284">
    <property type="entry name" value="thym_sym"/>
    <property type="match status" value="2"/>
</dbReference>
<dbReference type="PANTHER" id="PTHR11548:SF9">
    <property type="entry name" value="THYMIDYLATE SYNTHASE"/>
    <property type="match status" value="1"/>
</dbReference>
<dbReference type="PANTHER" id="PTHR11548">
    <property type="entry name" value="THYMIDYLATE SYNTHASE 1"/>
    <property type="match status" value="1"/>
</dbReference>
<dbReference type="Pfam" id="PF00303">
    <property type="entry name" value="Thymidylat_synt"/>
    <property type="match status" value="1"/>
</dbReference>
<dbReference type="PRINTS" id="PR00108">
    <property type="entry name" value="THYMDSNTHASE"/>
</dbReference>
<dbReference type="SUPFAM" id="SSF55831">
    <property type="entry name" value="Thymidylate synthase/dCMP hydroxymethylase"/>
    <property type="match status" value="1"/>
</dbReference>
<dbReference type="PROSITE" id="PS00091">
    <property type="entry name" value="THYMIDYLATE_SYNTHASE"/>
    <property type="match status" value="1"/>
</dbReference>
<sequence length="264" mass="30480">MKQYLELMQKVLDEGTQKNDRTGTGTLSIFGHQMRFNLQDGFPLVTTKRCHLRSIIHELLWFLQGDTNIAYLHENNVTIWDEWADENGDLGPVYGKQWRAWPTPDGRHIDQITTVLNQLKNDPDSRRIIVSAWNVGELDKMALAPCHAFFQFYVADGKLSCQLYQRSCDVFLGLPFNIASYALLVHMMAQQCDLEVGDFVWTGGDTHLYSNHMDQTHLQLSREPRPLPKLIIKRKPESIFDYRFEDFEIEGYDPHPGIKAPVAI</sequence>